<proteinExistence type="inferred from homology"/>
<accession>B2SDY9</accession>
<organism>
    <name type="scientific">Francisella tularensis subsp. mediasiatica (strain FSC147)</name>
    <dbReference type="NCBI Taxonomy" id="441952"/>
    <lineage>
        <taxon>Bacteria</taxon>
        <taxon>Pseudomonadati</taxon>
        <taxon>Pseudomonadota</taxon>
        <taxon>Gammaproteobacteria</taxon>
        <taxon>Thiotrichales</taxon>
        <taxon>Francisellaceae</taxon>
        <taxon>Francisella</taxon>
    </lineage>
</organism>
<keyword id="KW-0488">Methylation</keyword>
<keyword id="KW-0687">Ribonucleoprotein</keyword>
<keyword id="KW-0689">Ribosomal protein</keyword>
<keyword id="KW-0694">RNA-binding</keyword>
<keyword id="KW-0699">rRNA-binding</keyword>
<keyword id="KW-0820">tRNA-binding</keyword>
<comment type="function">
    <text evidence="2">With S4 and S5 plays an important role in translational accuracy.</text>
</comment>
<comment type="function">
    <text evidence="2">Interacts with and stabilizes bases of the 16S rRNA that are involved in tRNA selection in the A site and with the mRNA backbone. Located at the interface of the 30S and 50S subunits, it traverses the body of the 30S subunit contacting proteins on the other side and probably holding the rRNA structure together. The combined cluster of proteins S8, S12 and S17 appears to hold together the shoulder and platform of the 30S subunit.</text>
</comment>
<comment type="subunit">
    <text evidence="2">Part of the 30S ribosomal subunit. Contacts proteins S8 and S17. May interact with IF1 in the 30S initiation complex.</text>
</comment>
<comment type="similarity">
    <text evidence="2">Belongs to the universal ribosomal protein uS12 family.</text>
</comment>
<name>RS12_FRATM</name>
<evidence type="ECO:0000250" key="1"/>
<evidence type="ECO:0000255" key="2">
    <source>
        <dbReference type="HAMAP-Rule" id="MF_00403"/>
    </source>
</evidence>
<evidence type="ECO:0000256" key="3">
    <source>
        <dbReference type="SAM" id="MobiDB-lite"/>
    </source>
</evidence>
<evidence type="ECO:0000305" key="4"/>
<dbReference type="EMBL" id="CP000915">
    <property type="protein sequence ID" value="ACD31353.1"/>
    <property type="molecule type" value="Genomic_DNA"/>
</dbReference>
<dbReference type="SMR" id="B2SDY9"/>
<dbReference type="KEGG" id="ftm:FTM_1531"/>
<dbReference type="HOGENOM" id="CLU_104295_1_2_6"/>
<dbReference type="GO" id="GO:0015935">
    <property type="term" value="C:small ribosomal subunit"/>
    <property type="evidence" value="ECO:0007669"/>
    <property type="project" value="InterPro"/>
</dbReference>
<dbReference type="GO" id="GO:0019843">
    <property type="term" value="F:rRNA binding"/>
    <property type="evidence" value="ECO:0007669"/>
    <property type="project" value="UniProtKB-UniRule"/>
</dbReference>
<dbReference type="GO" id="GO:0003735">
    <property type="term" value="F:structural constituent of ribosome"/>
    <property type="evidence" value="ECO:0007669"/>
    <property type="project" value="InterPro"/>
</dbReference>
<dbReference type="GO" id="GO:0000049">
    <property type="term" value="F:tRNA binding"/>
    <property type="evidence" value="ECO:0007669"/>
    <property type="project" value="UniProtKB-UniRule"/>
</dbReference>
<dbReference type="GO" id="GO:0006412">
    <property type="term" value="P:translation"/>
    <property type="evidence" value="ECO:0007669"/>
    <property type="project" value="UniProtKB-UniRule"/>
</dbReference>
<dbReference type="CDD" id="cd03368">
    <property type="entry name" value="Ribosomal_S12"/>
    <property type="match status" value="1"/>
</dbReference>
<dbReference type="FunFam" id="2.40.50.140:FF:000001">
    <property type="entry name" value="30S ribosomal protein S12"/>
    <property type="match status" value="1"/>
</dbReference>
<dbReference type="Gene3D" id="2.40.50.140">
    <property type="entry name" value="Nucleic acid-binding proteins"/>
    <property type="match status" value="1"/>
</dbReference>
<dbReference type="HAMAP" id="MF_00403_B">
    <property type="entry name" value="Ribosomal_uS12_B"/>
    <property type="match status" value="1"/>
</dbReference>
<dbReference type="InterPro" id="IPR012340">
    <property type="entry name" value="NA-bd_OB-fold"/>
</dbReference>
<dbReference type="InterPro" id="IPR006032">
    <property type="entry name" value="Ribosomal_uS12"/>
</dbReference>
<dbReference type="InterPro" id="IPR005679">
    <property type="entry name" value="Ribosomal_uS12_bac"/>
</dbReference>
<dbReference type="NCBIfam" id="TIGR00981">
    <property type="entry name" value="rpsL_bact"/>
    <property type="match status" value="1"/>
</dbReference>
<dbReference type="PANTHER" id="PTHR11652">
    <property type="entry name" value="30S RIBOSOMAL PROTEIN S12 FAMILY MEMBER"/>
    <property type="match status" value="1"/>
</dbReference>
<dbReference type="Pfam" id="PF00164">
    <property type="entry name" value="Ribosom_S12_S23"/>
    <property type="match status" value="1"/>
</dbReference>
<dbReference type="PIRSF" id="PIRSF002133">
    <property type="entry name" value="Ribosomal_S12/S23"/>
    <property type="match status" value="1"/>
</dbReference>
<dbReference type="PRINTS" id="PR01034">
    <property type="entry name" value="RIBOSOMALS12"/>
</dbReference>
<dbReference type="SUPFAM" id="SSF50249">
    <property type="entry name" value="Nucleic acid-binding proteins"/>
    <property type="match status" value="1"/>
</dbReference>
<dbReference type="PROSITE" id="PS00055">
    <property type="entry name" value="RIBOSOMAL_S12"/>
    <property type="match status" value="1"/>
</dbReference>
<protein>
    <recommendedName>
        <fullName evidence="2">Small ribosomal subunit protein uS12</fullName>
    </recommendedName>
    <alternativeName>
        <fullName evidence="4">30S ribosomal protein S12</fullName>
    </alternativeName>
</protein>
<feature type="chain" id="PRO_1000194171" description="Small ribosomal subunit protein uS12">
    <location>
        <begin position="1"/>
        <end position="124"/>
    </location>
</feature>
<feature type="region of interest" description="Disordered" evidence="3">
    <location>
        <begin position="102"/>
        <end position="124"/>
    </location>
</feature>
<feature type="compositionally biased region" description="Basic residues" evidence="3">
    <location>
        <begin position="109"/>
        <end position="124"/>
    </location>
</feature>
<feature type="modified residue" description="3-methylthioaspartic acid" evidence="1">
    <location>
        <position position="89"/>
    </location>
</feature>
<reference key="1">
    <citation type="journal article" date="2009" name="PLoS Pathog.">
        <title>Molecular evolutionary consequences of niche restriction in Francisella tularensis, a facultative intracellular pathogen.</title>
        <authorList>
            <person name="Larsson P."/>
            <person name="Elfsmark D."/>
            <person name="Svensson K."/>
            <person name="Wikstroem P."/>
            <person name="Forsman M."/>
            <person name="Brettin T."/>
            <person name="Keim P."/>
            <person name="Johansson A."/>
        </authorList>
    </citation>
    <scope>NUCLEOTIDE SEQUENCE [LARGE SCALE GENOMIC DNA]</scope>
    <source>
        <strain>FSC147</strain>
    </source>
</reference>
<sequence>MATINQLVNNPRKRSVVKSKVPALKACPQRRGVCTRVYTTTPKKPNSALRKVARVRLTSRFEVTSYIGGEGHNLQEHSVVLIRGGRVKDLPGVRYHIVRGALDTSGVNNRKHGRSKYGTKRPKS</sequence>
<gene>
    <name evidence="2" type="primary">rpsL</name>
    <name type="ordered locus">FTM_1531</name>
</gene>